<accession>P0AAP0</accession>
<accession>P21831</accession>
<accession>P77383</accession>
<keyword id="KW-0175">Coiled coil</keyword>
<keyword id="KW-0963">Cytoplasm</keyword>
<keyword id="KW-1185">Reference proteome</keyword>
<keyword id="KW-0346">Stress response</keyword>
<organism>
    <name type="scientific">Escherichia coli O157:H7</name>
    <dbReference type="NCBI Taxonomy" id="83334"/>
    <lineage>
        <taxon>Bacteria</taxon>
        <taxon>Pseudomonadati</taxon>
        <taxon>Pseudomonadota</taxon>
        <taxon>Gammaproteobacteria</taxon>
        <taxon>Enterobacterales</taxon>
        <taxon>Enterobacteriaceae</taxon>
        <taxon>Escherichia</taxon>
    </lineage>
</organism>
<evidence type="ECO:0000255" key="1">
    <source>
        <dbReference type="HAMAP-Rule" id="MF_01198"/>
    </source>
</evidence>
<feature type="chain" id="PRO_0000168586" description="Anti-adapter protein IraP">
    <location>
        <begin position="1"/>
        <end position="86"/>
    </location>
</feature>
<feature type="coiled-coil region" evidence="1">
    <location>
        <begin position="1"/>
        <end position="36"/>
    </location>
</feature>
<dbReference type="EMBL" id="AE005174">
    <property type="protein sequence ID" value="AAG54728.1"/>
    <property type="molecule type" value="Genomic_DNA"/>
</dbReference>
<dbReference type="EMBL" id="BA000007">
    <property type="protein sequence ID" value="BAB33855.1"/>
    <property type="molecule type" value="Genomic_DNA"/>
</dbReference>
<dbReference type="PIR" id="D85533">
    <property type="entry name" value="D85533"/>
</dbReference>
<dbReference type="PIR" id="H90682">
    <property type="entry name" value="H90682"/>
</dbReference>
<dbReference type="RefSeq" id="NP_308459.1">
    <property type="nucleotide sequence ID" value="NC_002695.1"/>
</dbReference>
<dbReference type="RefSeq" id="WP_000792970.1">
    <property type="nucleotide sequence ID" value="NZ_VOAI01000005.1"/>
</dbReference>
<dbReference type="SMR" id="P0AAP0"/>
<dbReference type="STRING" id="155864.Z0478"/>
<dbReference type="GeneID" id="914534"/>
<dbReference type="GeneID" id="93777080"/>
<dbReference type="KEGG" id="ece:Z0478"/>
<dbReference type="KEGG" id="ecs:ECs_0432"/>
<dbReference type="PATRIC" id="fig|386585.9.peg.528"/>
<dbReference type="eggNOG" id="ENOG5032SF1">
    <property type="taxonomic scope" value="Bacteria"/>
</dbReference>
<dbReference type="HOGENOM" id="CLU_169517_0_0_6"/>
<dbReference type="OMA" id="IDTAMIH"/>
<dbReference type="Proteomes" id="UP000000558">
    <property type="component" value="Chromosome"/>
</dbReference>
<dbReference type="Proteomes" id="UP000002519">
    <property type="component" value="Chromosome"/>
</dbReference>
<dbReference type="GO" id="GO:0005737">
    <property type="term" value="C:cytoplasm"/>
    <property type="evidence" value="ECO:0007669"/>
    <property type="project" value="UniProtKB-SubCell"/>
</dbReference>
<dbReference type="GO" id="GO:0009267">
    <property type="term" value="P:cellular response to starvation"/>
    <property type="evidence" value="ECO:0007669"/>
    <property type="project" value="UniProtKB-UniRule"/>
</dbReference>
<dbReference type="HAMAP" id="MF_01198">
    <property type="entry name" value="Anti_adapt_IraP"/>
    <property type="match status" value="1"/>
</dbReference>
<dbReference type="InterPro" id="IPR019732">
    <property type="entry name" value="SigmaS_Anti-adapt_IraP"/>
</dbReference>
<dbReference type="NCBIfam" id="NF007598">
    <property type="entry name" value="PRK10244.1"/>
    <property type="match status" value="1"/>
</dbReference>
<dbReference type="Pfam" id="PF10796">
    <property type="entry name" value="Anti-adapt_IraP"/>
    <property type="match status" value="1"/>
</dbReference>
<gene>
    <name evidence="1" type="primary">iraP</name>
    <name type="ordered locus">Z0478</name>
    <name type="ordered locus">ECs0432</name>
</gene>
<name>IRAP_ECO57</name>
<sequence length="86" mass="9937">MKNLIAELLFKLAQKEEESKELCAQVEALEIIVTAMLRNMAQNDQQRLIDQVEGALYEVKPDASIPDDDTELLRDYVKKLLKHPRQ</sequence>
<reference key="1">
    <citation type="journal article" date="2001" name="Nature">
        <title>Genome sequence of enterohaemorrhagic Escherichia coli O157:H7.</title>
        <authorList>
            <person name="Perna N.T."/>
            <person name="Plunkett G. III"/>
            <person name="Burland V."/>
            <person name="Mau B."/>
            <person name="Glasner J.D."/>
            <person name="Rose D.J."/>
            <person name="Mayhew G.F."/>
            <person name="Evans P.S."/>
            <person name="Gregor J."/>
            <person name="Kirkpatrick H.A."/>
            <person name="Posfai G."/>
            <person name="Hackett J."/>
            <person name="Klink S."/>
            <person name="Boutin A."/>
            <person name="Shao Y."/>
            <person name="Miller L."/>
            <person name="Grotbeck E.J."/>
            <person name="Davis N.W."/>
            <person name="Lim A."/>
            <person name="Dimalanta E.T."/>
            <person name="Potamousis K."/>
            <person name="Apodaca J."/>
            <person name="Anantharaman T.S."/>
            <person name="Lin J."/>
            <person name="Yen G."/>
            <person name="Schwartz D.C."/>
            <person name="Welch R.A."/>
            <person name="Blattner F.R."/>
        </authorList>
    </citation>
    <scope>NUCLEOTIDE SEQUENCE [LARGE SCALE GENOMIC DNA]</scope>
    <source>
        <strain>O157:H7 / EDL933 / ATCC 700927 / EHEC</strain>
    </source>
</reference>
<reference key="2">
    <citation type="journal article" date="2001" name="DNA Res.">
        <title>Complete genome sequence of enterohemorrhagic Escherichia coli O157:H7 and genomic comparison with a laboratory strain K-12.</title>
        <authorList>
            <person name="Hayashi T."/>
            <person name="Makino K."/>
            <person name="Ohnishi M."/>
            <person name="Kurokawa K."/>
            <person name="Ishii K."/>
            <person name="Yokoyama K."/>
            <person name="Han C.-G."/>
            <person name="Ohtsubo E."/>
            <person name="Nakayama K."/>
            <person name="Murata T."/>
            <person name="Tanaka M."/>
            <person name="Tobe T."/>
            <person name="Iida T."/>
            <person name="Takami H."/>
            <person name="Honda T."/>
            <person name="Sasakawa C."/>
            <person name="Ogasawara N."/>
            <person name="Yasunaga T."/>
            <person name="Kuhara S."/>
            <person name="Shiba T."/>
            <person name="Hattori M."/>
            <person name="Shinagawa H."/>
        </authorList>
    </citation>
    <scope>NUCLEOTIDE SEQUENCE [LARGE SCALE GENOMIC DNA]</scope>
    <source>
        <strain>O157:H7 / Sakai / RIMD 0509952 / EHEC</strain>
    </source>
</reference>
<protein>
    <recommendedName>
        <fullName evidence="1">Anti-adapter protein IraP</fullName>
    </recommendedName>
</protein>
<proteinExistence type="inferred from homology"/>
<comment type="function">
    <text evidence="1">Inhibits RpoS proteolysis by regulating RssB activity, thereby increasing the stability of the sigma stress factor RpoS especially during phosphate starvation, but also in stationary phase and during nitrogen starvation. Its effect on RpoS stability is due to its interaction with RssB, which probably blocks the interaction of RssB with RpoS, and the consequent delivery of the RssB-RpoS complex to the ClpXP protein degradation pathway.</text>
</comment>
<comment type="subunit">
    <text evidence="1">Interacts with RssB.</text>
</comment>
<comment type="subcellular location">
    <subcellularLocation>
        <location evidence="1">Cytoplasm</location>
    </subcellularLocation>
</comment>
<comment type="similarity">
    <text evidence="1">Belongs to the IraP family.</text>
</comment>